<dbReference type="EMBL" id="AC011487">
    <property type="status" value="NOT_ANNOTATED_CDS"/>
    <property type="molecule type" value="Genomic_DNA"/>
</dbReference>
<dbReference type="CCDS" id="CCDS33103.1"/>
<dbReference type="RefSeq" id="NP_001012746.1">
    <property type="nucleotide sequence ID" value="NM_001012728.2"/>
</dbReference>
<dbReference type="RefSeq" id="XP_011525313.1">
    <property type="nucleotide sequence ID" value="XM_011527011.4"/>
</dbReference>
<dbReference type="RefSeq" id="XP_011525314.1">
    <property type="nucleotide sequence ID" value="XM_011527012.3"/>
</dbReference>
<dbReference type="RefSeq" id="XP_047294849.1">
    <property type="nucleotide sequence ID" value="XM_047438893.1"/>
</dbReference>
<dbReference type="RefSeq" id="XP_054177101.1">
    <property type="nucleotide sequence ID" value="XM_054321126.1"/>
</dbReference>
<dbReference type="RefSeq" id="XP_054177102.1">
    <property type="nucleotide sequence ID" value="XM_054321127.1"/>
</dbReference>
<dbReference type="RefSeq" id="XP_054177103.1">
    <property type="nucleotide sequence ID" value="XM_054321128.1"/>
</dbReference>
<dbReference type="SMR" id="A6NFQ7"/>
<dbReference type="BioGRID" id="139049">
    <property type="interactions" value="17"/>
</dbReference>
<dbReference type="FunCoup" id="A6NFQ7">
    <property type="interactions" value="95"/>
</dbReference>
<dbReference type="STRING" id="9606.ENSP00000365838"/>
<dbReference type="GlyGen" id="A6NFQ7">
    <property type="glycosylation" value="1 site, 1 O-linked glycan (1 site)"/>
</dbReference>
<dbReference type="iPTMnet" id="A6NFQ7"/>
<dbReference type="PhosphoSitePlus" id="A6NFQ7"/>
<dbReference type="BioMuta" id="DPRX"/>
<dbReference type="jPOST" id="A6NFQ7"/>
<dbReference type="PaxDb" id="9606-ENSP00000365838"/>
<dbReference type="Antibodypedia" id="49837">
    <property type="antibodies" value="32 antibodies from 11 providers"/>
</dbReference>
<dbReference type="DNASU" id="503834"/>
<dbReference type="Ensembl" id="ENST00000376650.2">
    <property type="protein sequence ID" value="ENSP00000365838.1"/>
    <property type="gene ID" value="ENSG00000204595.3"/>
</dbReference>
<dbReference type="Ensembl" id="ENST00000710707.1">
    <property type="protein sequence ID" value="ENSP00000518423.1"/>
    <property type="gene ID" value="ENSG00000204595.3"/>
</dbReference>
<dbReference type="GeneID" id="503834"/>
<dbReference type="KEGG" id="hsa:503834"/>
<dbReference type="MANE-Select" id="ENST00000376650.2">
    <property type="protein sequence ID" value="ENSP00000365838.1"/>
    <property type="RefSeq nucleotide sequence ID" value="NM_001012728.2"/>
    <property type="RefSeq protein sequence ID" value="NP_001012746.1"/>
</dbReference>
<dbReference type="UCSC" id="uc002qcf.1">
    <property type="organism name" value="human"/>
</dbReference>
<dbReference type="AGR" id="HGNC:32166"/>
<dbReference type="CTD" id="503834"/>
<dbReference type="DisGeNET" id="503834"/>
<dbReference type="GeneCards" id="DPRX"/>
<dbReference type="HGNC" id="HGNC:32166">
    <property type="gene designation" value="DPRX"/>
</dbReference>
<dbReference type="HPA" id="ENSG00000204595">
    <property type="expression patterns" value="Tissue enhanced (placenta, skeletal muscle)"/>
</dbReference>
<dbReference type="MIM" id="611165">
    <property type="type" value="gene"/>
</dbReference>
<dbReference type="neXtProt" id="NX_A6NFQ7"/>
<dbReference type="PharmGKB" id="PA142671957"/>
<dbReference type="VEuPathDB" id="HostDB:ENSG00000204595"/>
<dbReference type="eggNOG" id="KOG0490">
    <property type="taxonomic scope" value="Eukaryota"/>
</dbReference>
<dbReference type="GeneTree" id="ENSGT00640000091698"/>
<dbReference type="HOGENOM" id="CLU_135951_0_0_1"/>
<dbReference type="InParanoid" id="A6NFQ7"/>
<dbReference type="OMA" id="RTMFTKK"/>
<dbReference type="OrthoDB" id="6159439at2759"/>
<dbReference type="PAN-GO" id="A6NFQ7">
    <property type="GO annotations" value="4 GO annotations based on evolutionary models"/>
</dbReference>
<dbReference type="PhylomeDB" id="A6NFQ7"/>
<dbReference type="SignaLink" id="A6NFQ7"/>
<dbReference type="BioGRID-ORCS" id="503834">
    <property type="hits" value="9 hits in 1159 CRISPR screens"/>
</dbReference>
<dbReference type="ChiTaRS" id="DPRX">
    <property type="organism name" value="human"/>
</dbReference>
<dbReference type="GenomeRNAi" id="503834"/>
<dbReference type="Pharos" id="A6NFQ7">
    <property type="development level" value="Tdark"/>
</dbReference>
<dbReference type="PRO" id="PR:A6NFQ7"/>
<dbReference type="Proteomes" id="UP000005640">
    <property type="component" value="Chromosome 19"/>
</dbReference>
<dbReference type="RNAct" id="A6NFQ7">
    <property type="molecule type" value="protein"/>
</dbReference>
<dbReference type="Bgee" id="ENSG00000204595">
    <property type="expression patterns" value="Expressed in male germ line stem cell (sensu Vertebrata) in testis and 36 other cell types or tissues"/>
</dbReference>
<dbReference type="GO" id="GO:0000785">
    <property type="term" value="C:chromatin"/>
    <property type="evidence" value="ECO:0000247"/>
    <property type="project" value="NTNU_SB"/>
</dbReference>
<dbReference type="GO" id="GO:0005634">
    <property type="term" value="C:nucleus"/>
    <property type="evidence" value="ECO:0000318"/>
    <property type="project" value="GO_Central"/>
</dbReference>
<dbReference type="GO" id="GO:0000981">
    <property type="term" value="F:DNA-binding transcription factor activity, RNA polymerase II-specific"/>
    <property type="evidence" value="ECO:0000247"/>
    <property type="project" value="NTNU_SB"/>
</dbReference>
<dbReference type="GO" id="GO:0000978">
    <property type="term" value="F:RNA polymerase II cis-regulatory region sequence-specific DNA binding"/>
    <property type="evidence" value="ECO:0000318"/>
    <property type="project" value="GO_Central"/>
</dbReference>
<dbReference type="GO" id="GO:1990837">
    <property type="term" value="F:sequence-specific double-stranded DNA binding"/>
    <property type="evidence" value="ECO:0000314"/>
    <property type="project" value="ARUK-UCL"/>
</dbReference>
<dbReference type="GO" id="GO:0006357">
    <property type="term" value="P:regulation of transcription by RNA polymerase II"/>
    <property type="evidence" value="ECO:0000318"/>
    <property type="project" value="GO_Central"/>
</dbReference>
<dbReference type="CDD" id="cd00086">
    <property type="entry name" value="homeodomain"/>
    <property type="match status" value="1"/>
</dbReference>
<dbReference type="FunFam" id="1.10.10.60:FF:000486">
    <property type="entry name" value="Divergent paired-related homeobox"/>
    <property type="match status" value="1"/>
</dbReference>
<dbReference type="Gene3D" id="1.10.10.60">
    <property type="entry name" value="Homeodomain-like"/>
    <property type="match status" value="1"/>
</dbReference>
<dbReference type="InterPro" id="IPR001356">
    <property type="entry name" value="HD"/>
</dbReference>
<dbReference type="InterPro" id="IPR017970">
    <property type="entry name" value="Homeobox_CS"/>
</dbReference>
<dbReference type="InterPro" id="IPR009057">
    <property type="entry name" value="Homeodomain-like_sf"/>
</dbReference>
<dbReference type="PANTHER" id="PTHR45793:SF15">
    <property type="entry name" value="DIVERGENT PAIRED-RELATED HOMEOBOX"/>
    <property type="match status" value="1"/>
</dbReference>
<dbReference type="PANTHER" id="PTHR45793">
    <property type="entry name" value="HOMEOBOX PROTEIN"/>
    <property type="match status" value="1"/>
</dbReference>
<dbReference type="Pfam" id="PF00046">
    <property type="entry name" value="Homeodomain"/>
    <property type="match status" value="1"/>
</dbReference>
<dbReference type="SMART" id="SM00389">
    <property type="entry name" value="HOX"/>
    <property type="match status" value="1"/>
</dbReference>
<dbReference type="SUPFAM" id="SSF46689">
    <property type="entry name" value="Homeodomain-like"/>
    <property type="match status" value="1"/>
</dbReference>
<dbReference type="PROSITE" id="PS00027">
    <property type="entry name" value="HOMEOBOX_1"/>
    <property type="match status" value="1"/>
</dbReference>
<dbReference type="PROSITE" id="PS50071">
    <property type="entry name" value="HOMEOBOX_2"/>
    <property type="match status" value="1"/>
</dbReference>
<organism>
    <name type="scientific">Homo sapiens</name>
    <name type="common">Human</name>
    <dbReference type="NCBI Taxonomy" id="9606"/>
    <lineage>
        <taxon>Eukaryota</taxon>
        <taxon>Metazoa</taxon>
        <taxon>Chordata</taxon>
        <taxon>Craniata</taxon>
        <taxon>Vertebrata</taxon>
        <taxon>Euteleostomi</taxon>
        <taxon>Mammalia</taxon>
        <taxon>Eutheria</taxon>
        <taxon>Euarchontoglires</taxon>
        <taxon>Primates</taxon>
        <taxon>Haplorrhini</taxon>
        <taxon>Catarrhini</taxon>
        <taxon>Hominidae</taxon>
        <taxon>Homo</taxon>
    </lineage>
</organism>
<feature type="chain" id="PRO_0000311326" description="Divergent paired-related homeobox">
    <location>
        <begin position="1"/>
        <end position="191"/>
    </location>
</feature>
<feature type="DNA-binding region" description="Homeobox" evidence="1">
    <location>
        <begin position="16"/>
        <end position="75"/>
    </location>
</feature>
<feature type="region of interest" description="Disordered" evidence="2">
    <location>
        <begin position="1"/>
        <end position="20"/>
    </location>
</feature>
<feature type="compositionally biased region" description="Basic and acidic residues" evidence="2">
    <location>
        <begin position="1"/>
        <end position="15"/>
    </location>
</feature>
<evidence type="ECO:0000255" key="1">
    <source>
        <dbReference type="PROSITE-ProRule" id="PRU00108"/>
    </source>
</evidence>
<evidence type="ECO:0000256" key="2">
    <source>
        <dbReference type="SAM" id="MobiDB-lite"/>
    </source>
</evidence>
<evidence type="ECO:0000269" key="3">
    <source>
    </source>
</evidence>
<evidence type="ECO:0000305" key="4"/>
<evidence type="ECO:0000312" key="5">
    <source>
        <dbReference type="HGNC" id="HGNC:32166"/>
    </source>
</evidence>
<proteinExistence type="evidence at transcript level"/>
<gene>
    <name evidence="5" type="primary">DPRX</name>
</gene>
<accession>A6NFQ7</accession>
<protein>
    <recommendedName>
        <fullName evidence="4">Divergent paired-related homeobox</fullName>
    </recommendedName>
</protein>
<keyword id="KW-0238">DNA-binding</keyword>
<keyword id="KW-0371">Homeobox</keyword>
<keyword id="KW-0539">Nucleus</keyword>
<keyword id="KW-1185">Reference proteome</keyword>
<keyword id="KW-0678">Repressor</keyword>
<keyword id="KW-0804">Transcription</keyword>
<keyword id="KW-0805">Transcription regulation</keyword>
<sequence length="191" mass="21648">MPGSEDLRKGKDQMHSHRKRTMFTKKQLEDLNILFNENPYPNPSLQKEMASKIDIHPTVLQVWFKNHRAKLKKAKCKHIHQKQETPQPPIPEGGVSTSVGLRNADTLPRLPNAAHPIGLVYTGHRVPSFQLILYPNLKVPANDFIGHRIVHFGCCRDPNIYCLYPILESQVCAPSFHSGSPACSSNQSRER</sequence>
<name>DPRX_HUMAN</name>
<comment type="function">
    <text evidence="3">Transcription factor that acts as a repressor.</text>
</comment>
<comment type="subcellular location">
    <subcellularLocation>
        <location evidence="1">Nucleus</location>
    </subcellularLocation>
</comment>
<comment type="developmental stage">
    <text evidence="3">Expressed in single blastomeres from 8-cell stage embryos.</text>
</comment>
<comment type="similarity">
    <text evidence="4">Belongs to the paired homeobox family.</text>
</comment>
<reference key="1">
    <citation type="journal article" date="2004" name="Nature">
        <title>The DNA sequence and biology of human chromosome 19.</title>
        <authorList>
            <person name="Grimwood J."/>
            <person name="Gordon L.A."/>
            <person name="Olsen A.S."/>
            <person name="Terry A."/>
            <person name="Schmutz J."/>
            <person name="Lamerdin J.E."/>
            <person name="Hellsten U."/>
            <person name="Goodstein D."/>
            <person name="Couronne O."/>
            <person name="Tran-Gyamfi M."/>
            <person name="Aerts A."/>
            <person name="Altherr M."/>
            <person name="Ashworth L."/>
            <person name="Bajorek E."/>
            <person name="Black S."/>
            <person name="Branscomb E."/>
            <person name="Caenepeel S."/>
            <person name="Carrano A.V."/>
            <person name="Caoile C."/>
            <person name="Chan Y.M."/>
            <person name="Christensen M."/>
            <person name="Cleland C.A."/>
            <person name="Copeland A."/>
            <person name="Dalin E."/>
            <person name="Dehal P."/>
            <person name="Denys M."/>
            <person name="Detter J.C."/>
            <person name="Escobar J."/>
            <person name="Flowers D."/>
            <person name="Fotopulos D."/>
            <person name="Garcia C."/>
            <person name="Georgescu A.M."/>
            <person name="Glavina T."/>
            <person name="Gomez M."/>
            <person name="Gonzales E."/>
            <person name="Groza M."/>
            <person name="Hammon N."/>
            <person name="Hawkins T."/>
            <person name="Haydu L."/>
            <person name="Ho I."/>
            <person name="Huang W."/>
            <person name="Israni S."/>
            <person name="Jett J."/>
            <person name="Kadner K."/>
            <person name="Kimball H."/>
            <person name="Kobayashi A."/>
            <person name="Larionov V."/>
            <person name="Leem S.-H."/>
            <person name="Lopez F."/>
            <person name="Lou Y."/>
            <person name="Lowry S."/>
            <person name="Malfatti S."/>
            <person name="Martinez D."/>
            <person name="McCready P.M."/>
            <person name="Medina C."/>
            <person name="Morgan J."/>
            <person name="Nelson K."/>
            <person name="Nolan M."/>
            <person name="Ovcharenko I."/>
            <person name="Pitluck S."/>
            <person name="Pollard M."/>
            <person name="Popkie A.P."/>
            <person name="Predki P."/>
            <person name="Quan G."/>
            <person name="Ramirez L."/>
            <person name="Rash S."/>
            <person name="Retterer J."/>
            <person name="Rodriguez A."/>
            <person name="Rogers S."/>
            <person name="Salamov A."/>
            <person name="Salazar A."/>
            <person name="She X."/>
            <person name="Smith D."/>
            <person name="Slezak T."/>
            <person name="Solovyev V."/>
            <person name="Thayer N."/>
            <person name="Tice H."/>
            <person name="Tsai M."/>
            <person name="Ustaszewska A."/>
            <person name="Vo N."/>
            <person name="Wagner M."/>
            <person name="Wheeler J."/>
            <person name="Wu K."/>
            <person name="Xie G."/>
            <person name="Yang J."/>
            <person name="Dubchak I."/>
            <person name="Furey T.S."/>
            <person name="DeJong P."/>
            <person name="Dickson M."/>
            <person name="Gordon D."/>
            <person name="Eichler E.E."/>
            <person name="Pennacchio L.A."/>
            <person name="Richardson P."/>
            <person name="Stubbs L."/>
            <person name="Rokhsar D.S."/>
            <person name="Myers R.M."/>
            <person name="Rubin E.M."/>
            <person name="Lucas S.M."/>
        </authorList>
    </citation>
    <scope>NUCLEOTIDE SEQUENCE [LARGE SCALE GENOMIC DNA]</scope>
</reference>
<reference key="2">
    <citation type="journal article" date="2007" name="Gene">
        <title>Annotation, nomenclature and evolution of four novel homeobox genes expressed in the human germ line.</title>
        <authorList>
            <person name="Booth H.A."/>
            <person name="Holland P.W.H."/>
        </authorList>
    </citation>
    <scope>IDENTIFICATION</scope>
</reference>
<reference key="3">
    <citation type="journal article" date="2016" name="Sci. Rep.">
        <title>Characterization and target genes of nine human PRD-like homeobox domain genes expressed exclusively in early embryos.</title>
        <authorList>
            <person name="Madissoon E."/>
            <person name="Jouhilahti E.M."/>
            <person name="Vesterlund L."/>
            <person name="Toehoenen V."/>
            <person name="Krjutskov K."/>
            <person name="Petropoulos S."/>
            <person name="Einarsdottir E."/>
            <person name="Linnarsson S."/>
            <person name="Lanner F."/>
            <person name="Maansson R."/>
            <person name="Hovatta O."/>
            <person name="Buerglin T.R."/>
            <person name="Katayama S."/>
            <person name="Kere J."/>
        </authorList>
    </citation>
    <scope>FUNCTION</scope>
    <scope>DEVELOPMENTAL STAGE</scope>
</reference>